<accession>P66313</accession>
<accession>Q8XFL6</accession>
<name>RL6_SALTY</name>
<reference key="1">
    <citation type="journal article" date="2001" name="Nature">
        <title>Complete genome sequence of Salmonella enterica serovar Typhimurium LT2.</title>
        <authorList>
            <person name="McClelland M."/>
            <person name="Sanderson K.E."/>
            <person name="Spieth J."/>
            <person name="Clifton S.W."/>
            <person name="Latreille P."/>
            <person name="Courtney L."/>
            <person name="Porwollik S."/>
            <person name="Ali J."/>
            <person name="Dante M."/>
            <person name="Du F."/>
            <person name="Hou S."/>
            <person name="Layman D."/>
            <person name="Leonard S."/>
            <person name="Nguyen C."/>
            <person name="Scott K."/>
            <person name="Holmes A."/>
            <person name="Grewal N."/>
            <person name="Mulvaney E."/>
            <person name="Ryan E."/>
            <person name="Sun H."/>
            <person name="Florea L."/>
            <person name="Miller W."/>
            <person name="Stoneking T."/>
            <person name="Nhan M."/>
            <person name="Waterston R."/>
            <person name="Wilson R.K."/>
        </authorList>
    </citation>
    <scope>NUCLEOTIDE SEQUENCE [LARGE SCALE GENOMIC DNA]</scope>
    <source>
        <strain>LT2 / SGSC1412 / ATCC 700720</strain>
    </source>
</reference>
<dbReference type="EMBL" id="AE006468">
    <property type="protein sequence ID" value="AAL22288.1"/>
    <property type="molecule type" value="Genomic_DNA"/>
</dbReference>
<dbReference type="RefSeq" id="NP_462329.1">
    <property type="nucleotide sequence ID" value="NC_003197.2"/>
</dbReference>
<dbReference type="RefSeq" id="WP_000091939.1">
    <property type="nucleotide sequence ID" value="NC_003197.2"/>
</dbReference>
<dbReference type="SMR" id="P66313"/>
<dbReference type="STRING" id="99287.STM3425"/>
<dbReference type="PaxDb" id="99287-STM3425"/>
<dbReference type="GeneID" id="1254948"/>
<dbReference type="KEGG" id="stm:STM3425"/>
<dbReference type="PATRIC" id="fig|99287.12.peg.3622"/>
<dbReference type="HOGENOM" id="CLU_065464_1_2_6"/>
<dbReference type="OMA" id="RERHGLC"/>
<dbReference type="PhylomeDB" id="P66313"/>
<dbReference type="BioCyc" id="SENT99287:STM3425-MONOMER"/>
<dbReference type="Proteomes" id="UP000001014">
    <property type="component" value="Chromosome"/>
</dbReference>
<dbReference type="GO" id="GO:0022625">
    <property type="term" value="C:cytosolic large ribosomal subunit"/>
    <property type="evidence" value="ECO:0000318"/>
    <property type="project" value="GO_Central"/>
</dbReference>
<dbReference type="GO" id="GO:0019843">
    <property type="term" value="F:rRNA binding"/>
    <property type="evidence" value="ECO:0007669"/>
    <property type="project" value="UniProtKB-UniRule"/>
</dbReference>
<dbReference type="GO" id="GO:0003735">
    <property type="term" value="F:structural constituent of ribosome"/>
    <property type="evidence" value="ECO:0000318"/>
    <property type="project" value="GO_Central"/>
</dbReference>
<dbReference type="GO" id="GO:0002181">
    <property type="term" value="P:cytoplasmic translation"/>
    <property type="evidence" value="ECO:0000318"/>
    <property type="project" value="GO_Central"/>
</dbReference>
<dbReference type="FunFam" id="3.90.930.12:FF:000001">
    <property type="entry name" value="50S ribosomal protein L6"/>
    <property type="match status" value="1"/>
</dbReference>
<dbReference type="FunFam" id="3.90.930.12:FF:000002">
    <property type="entry name" value="50S ribosomal protein L6"/>
    <property type="match status" value="1"/>
</dbReference>
<dbReference type="Gene3D" id="3.90.930.12">
    <property type="entry name" value="Ribosomal protein L6, alpha-beta domain"/>
    <property type="match status" value="2"/>
</dbReference>
<dbReference type="HAMAP" id="MF_01365_B">
    <property type="entry name" value="Ribosomal_uL6_B"/>
    <property type="match status" value="1"/>
</dbReference>
<dbReference type="InterPro" id="IPR000702">
    <property type="entry name" value="Ribosomal_uL6-like"/>
</dbReference>
<dbReference type="InterPro" id="IPR036789">
    <property type="entry name" value="Ribosomal_uL6-like_a/b-dom_sf"/>
</dbReference>
<dbReference type="InterPro" id="IPR020040">
    <property type="entry name" value="Ribosomal_uL6_a/b-dom"/>
</dbReference>
<dbReference type="InterPro" id="IPR019906">
    <property type="entry name" value="Ribosomal_uL6_bac-type"/>
</dbReference>
<dbReference type="InterPro" id="IPR002358">
    <property type="entry name" value="Ribosomal_uL6_CS"/>
</dbReference>
<dbReference type="NCBIfam" id="TIGR03654">
    <property type="entry name" value="L6_bact"/>
    <property type="match status" value="1"/>
</dbReference>
<dbReference type="PANTHER" id="PTHR11655">
    <property type="entry name" value="60S/50S RIBOSOMAL PROTEIN L6/L9"/>
    <property type="match status" value="1"/>
</dbReference>
<dbReference type="PANTHER" id="PTHR11655:SF14">
    <property type="entry name" value="LARGE RIBOSOMAL SUBUNIT PROTEIN UL6M"/>
    <property type="match status" value="1"/>
</dbReference>
<dbReference type="Pfam" id="PF00347">
    <property type="entry name" value="Ribosomal_L6"/>
    <property type="match status" value="2"/>
</dbReference>
<dbReference type="PIRSF" id="PIRSF002162">
    <property type="entry name" value="Ribosomal_L6"/>
    <property type="match status" value="1"/>
</dbReference>
<dbReference type="PRINTS" id="PR00059">
    <property type="entry name" value="RIBOSOMALL6"/>
</dbReference>
<dbReference type="SUPFAM" id="SSF56053">
    <property type="entry name" value="Ribosomal protein L6"/>
    <property type="match status" value="2"/>
</dbReference>
<dbReference type="PROSITE" id="PS00525">
    <property type="entry name" value="RIBOSOMAL_L6_1"/>
    <property type="match status" value="1"/>
</dbReference>
<organism>
    <name type="scientific">Salmonella typhimurium (strain LT2 / SGSC1412 / ATCC 700720)</name>
    <dbReference type="NCBI Taxonomy" id="99287"/>
    <lineage>
        <taxon>Bacteria</taxon>
        <taxon>Pseudomonadati</taxon>
        <taxon>Pseudomonadota</taxon>
        <taxon>Gammaproteobacteria</taxon>
        <taxon>Enterobacterales</taxon>
        <taxon>Enterobacteriaceae</taxon>
        <taxon>Salmonella</taxon>
    </lineage>
</organism>
<comment type="function">
    <text evidence="2">This protein binds to the 23S rRNA, and is important in its secondary structure. It is located near the subunit interface in the base of the L7/L12 stalk, and near the tRNA binding site of the peptidyltransferase center.</text>
</comment>
<comment type="subunit">
    <text evidence="2">Part of the 50S ribosomal subunit.</text>
</comment>
<comment type="similarity">
    <text evidence="2">Belongs to the universal ribosomal protein uL6 family.</text>
</comment>
<sequence length="177" mass="18860">MSRVAKAPVVVPAGVDVKINGQVITIKGKNGELTRTLNDAVEVKHADNALTFGPRDGYADGWAQAGTARALLNSMVIGVTEGFTKKLQLVGVGYRAAVKGNVVNLSLGFSHPVDHQLPAGITAECPTQTEIVLKGADKQVIGQVAADLRAYRRPEPYKGKGVRYADEVVRTKEAKKK</sequence>
<gene>
    <name evidence="2" type="primary">rplF</name>
    <name type="ordered locus">STM3425</name>
</gene>
<keyword id="KW-1185">Reference proteome</keyword>
<keyword id="KW-0687">Ribonucleoprotein</keyword>
<keyword id="KW-0689">Ribosomal protein</keyword>
<keyword id="KW-0694">RNA-binding</keyword>
<keyword id="KW-0699">rRNA-binding</keyword>
<proteinExistence type="inferred from homology"/>
<protein>
    <recommendedName>
        <fullName evidence="2">Large ribosomal subunit protein uL6</fullName>
    </recommendedName>
    <alternativeName>
        <fullName evidence="3">50S ribosomal protein L6</fullName>
    </alternativeName>
</protein>
<feature type="initiator methionine" description="Removed" evidence="1">
    <location>
        <position position="1"/>
    </location>
</feature>
<feature type="chain" id="PRO_0000131065" description="Large ribosomal subunit protein uL6">
    <location>
        <begin position="2"/>
        <end position="177"/>
    </location>
</feature>
<evidence type="ECO:0000250" key="1"/>
<evidence type="ECO:0000255" key="2">
    <source>
        <dbReference type="HAMAP-Rule" id="MF_01365"/>
    </source>
</evidence>
<evidence type="ECO:0000305" key="3"/>